<keyword id="KW-0963">Cytoplasm</keyword>
<keyword id="KW-0324">Glycolysis</keyword>
<keyword id="KW-0456">Lyase</keyword>
<keyword id="KW-0460">Magnesium</keyword>
<keyword id="KW-0479">Metal-binding</keyword>
<keyword id="KW-1185">Reference proteome</keyword>
<keyword id="KW-0964">Secreted</keyword>
<evidence type="ECO:0000255" key="1">
    <source>
        <dbReference type="HAMAP-Rule" id="MF_00318"/>
    </source>
</evidence>
<organism>
    <name type="scientific">Mycobacterium tuberculosis (strain ATCC 25177 / H37Ra)</name>
    <dbReference type="NCBI Taxonomy" id="419947"/>
    <lineage>
        <taxon>Bacteria</taxon>
        <taxon>Bacillati</taxon>
        <taxon>Actinomycetota</taxon>
        <taxon>Actinomycetes</taxon>
        <taxon>Mycobacteriales</taxon>
        <taxon>Mycobacteriaceae</taxon>
        <taxon>Mycobacterium</taxon>
        <taxon>Mycobacterium tuberculosis complex</taxon>
    </lineage>
</organism>
<protein>
    <recommendedName>
        <fullName evidence="1">Enolase</fullName>
        <ecNumber evidence="1">4.2.1.11</ecNumber>
    </recommendedName>
    <alternativeName>
        <fullName evidence="1">2-phospho-D-glycerate hydro-lyase</fullName>
    </alternativeName>
    <alternativeName>
        <fullName evidence="1">2-phosphoglycerate dehydratase</fullName>
    </alternativeName>
</protein>
<gene>
    <name evidence="1" type="primary">eno</name>
    <name type="ordered locus">MRA_1031</name>
</gene>
<reference key="1">
    <citation type="journal article" date="2008" name="PLoS ONE">
        <title>Genetic basis of virulence attenuation revealed by comparative genomic analysis of Mycobacterium tuberculosis strain H37Ra versus H37Rv.</title>
        <authorList>
            <person name="Zheng H."/>
            <person name="Lu L."/>
            <person name="Wang B."/>
            <person name="Pu S."/>
            <person name="Zhang X."/>
            <person name="Zhu G."/>
            <person name="Shi W."/>
            <person name="Zhang L."/>
            <person name="Wang H."/>
            <person name="Wang S."/>
            <person name="Zhao G."/>
            <person name="Zhang Y."/>
        </authorList>
    </citation>
    <scope>NUCLEOTIDE SEQUENCE [LARGE SCALE GENOMIC DNA]</scope>
    <source>
        <strain>ATCC 25177 / H37Ra</strain>
    </source>
</reference>
<sequence>MPIIEQVRAREILDSRGNPTVEVEVALIDGTFARAAVPSGASTGEHEAVELRDGGDRYGGKGVQKAVQAVLDEIGPAVIGLNADDQRLVDQALVDLDGTPDKSRLGGNAILGVSLAVAKAAADSAELPLFRYVGGPNAHILPVPMMNILNGGAHADTAVDIQEFMVAPIGAPSFVEALRWGAEVYHALKSVLKKEGLSTGLGDEGGFAPDVAGTTAALDLISRAIESAGLRPGADVALALDAAATEFFTDGTGYVFEGTTRTADQMTEFYAGLLGAYPLVSIEDPLSEDDWDGWAALTASIGDRVQIVGDDIFVTNPERLEEGIERGVANALLVKVNQIGTLTETLDAVTLAHHGGYRTMISHRSGETEDTMIADLAVAIGSGQIKTGAPARSERVAKYNQLLRIEEALGDAARYAGDLAFPRFACETK</sequence>
<proteinExistence type="inferred from homology"/>
<accession>A5U166</accession>
<feature type="chain" id="PRO_1000019225" description="Enolase">
    <location>
        <begin position="1"/>
        <end position="429"/>
    </location>
</feature>
<feature type="active site" description="Proton donor" evidence="1">
    <location>
        <position position="204"/>
    </location>
</feature>
<feature type="active site" description="Proton acceptor" evidence="1">
    <location>
        <position position="335"/>
    </location>
</feature>
<feature type="binding site" evidence="1">
    <location>
        <position position="162"/>
    </location>
    <ligand>
        <name>(2R)-2-phosphoglycerate</name>
        <dbReference type="ChEBI" id="CHEBI:58289"/>
    </ligand>
</feature>
<feature type="binding site" evidence="1">
    <location>
        <position position="241"/>
    </location>
    <ligand>
        <name>Mg(2+)</name>
        <dbReference type="ChEBI" id="CHEBI:18420"/>
    </ligand>
</feature>
<feature type="binding site" evidence="1">
    <location>
        <position position="283"/>
    </location>
    <ligand>
        <name>Mg(2+)</name>
        <dbReference type="ChEBI" id="CHEBI:18420"/>
    </ligand>
</feature>
<feature type="binding site" evidence="1">
    <location>
        <position position="310"/>
    </location>
    <ligand>
        <name>Mg(2+)</name>
        <dbReference type="ChEBI" id="CHEBI:18420"/>
    </ligand>
</feature>
<feature type="binding site" evidence="1">
    <location>
        <position position="335"/>
    </location>
    <ligand>
        <name>(2R)-2-phosphoglycerate</name>
        <dbReference type="ChEBI" id="CHEBI:58289"/>
    </ligand>
</feature>
<feature type="binding site" evidence="1">
    <location>
        <position position="364"/>
    </location>
    <ligand>
        <name>(2R)-2-phosphoglycerate</name>
        <dbReference type="ChEBI" id="CHEBI:58289"/>
    </ligand>
</feature>
<feature type="binding site" evidence="1">
    <location>
        <position position="365"/>
    </location>
    <ligand>
        <name>(2R)-2-phosphoglycerate</name>
        <dbReference type="ChEBI" id="CHEBI:58289"/>
    </ligand>
</feature>
<feature type="binding site" evidence="1">
    <location>
        <position position="386"/>
    </location>
    <ligand>
        <name>(2R)-2-phosphoglycerate</name>
        <dbReference type="ChEBI" id="CHEBI:58289"/>
    </ligand>
</feature>
<name>ENO_MYCTA</name>
<dbReference type="EC" id="4.2.1.11" evidence="1"/>
<dbReference type="EMBL" id="CP000611">
    <property type="protein sequence ID" value="ABQ72766.1"/>
    <property type="molecule type" value="Genomic_DNA"/>
</dbReference>
<dbReference type="RefSeq" id="WP_003898693.1">
    <property type="nucleotide sequence ID" value="NZ_CP016972.1"/>
</dbReference>
<dbReference type="SMR" id="A5U166"/>
<dbReference type="KEGG" id="mra:MRA_1031"/>
<dbReference type="eggNOG" id="COG4948">
    <property type="taxonomic scope" value="Bacteria"/>
</dbReference>
<dbReference type="HOGENOM" id="CLU_031223_0_1_11"/>
<dbReference type="UniPathway" id="UPA00109">
    <property type="reaction ID" value="UER00187"/>
</dbReference>
<dbReference type="Proteomes" id="UP000001988">
    <property type="component" value="Chromosome"/>
</dbReference>
<dbReference type="GO" id="GO:0009986">
    <property type="term" value="C:cell surface"/>
    <property type="evidence" value="ECO:0007669"/>
    <property type="project" value="UniProtKB-SubCell"/>
</dbReference>
<dbReference type="GO" id="GO:0005576">
    <property type="term" value="C:extracellular region"/>
    <property type="evidence" value="ECO:0007669"/>
    <property type="project" value="UniProtKB-SubCell"/>
</dbReference>
<dbReference type="GO" id="GO:0000015">
    <property type="term" value="C:phosphopyruvate hydratase complex"/>
    <property type="evidence" value="ECO:0007669"/>
    <property type="project" value="InterPro"/>
</dbReference>
<dbReference type="GO" id="GO:0000287">
    <property type="term" value="F:magnesium ion binding"/>
    <property type="evidence" value="ECO:0007669"/>
    <property type="project" value="UniProtKB-UniRule"/>
</dbReference>
<dbReference type="GO" id="GO:0004634">
    <property type="term" value="F:phosphopyruvate hydratase activity"/>
    <property type="evidence" value="ECO:0007669"/>
    <property type="project" value="UniProtKB-UniRule"/>
</dbReference>
<dbReference type="GO" id="GO:0006096">
    <property type="term" value="P:glycolytic process"/>
    <property type="evidence" value="ECO:0007669"/>
    <property type="project" value="UniProtKB-UniRule"/>
</dbReference>
<dbReference type="CDD" id="cd03313">
    <property type="entry name" value="enolase"/>
    <property type="match status" value="1"/>
</dbReference>
<dbReference type="FunFam" id="3.20.20.120:FF:000001">
    <property type="entry name" value="Enolase"/>
    <property type="match status" value="1"/>
</dbReference>
<dbReference type="FunFam" id="3.30.390.10:FF:000001">
    <property type="entry name" value="Enolase"/>
    <property type="match status" value="1"/>
</dbReference>
<dbReference type="Gene3D" id="3.20.20.120">
    <property type="entry name" value="Enolase-like C-terminal domain"/>
    <property type="match status" value="1"/>
</dbReference>
<dbReference type="Gene3D" id="3.30.390.10">
    <property type="entry name" value="Enolase-like, N-terminal domain"/>
    <property type="match status" value="1"/>
</dbReference>
<dbReference type="HAMAP" id="MF_00318">
    <property type="entry name" value="Enolase"/>
    <property type="match status" value="1"/>
</dbReference>
<dbReference type="InterPro" id="IPR000941">
    <property type="entry name" value="Enolase"/>
</dbReference>
<dbReference type="InterPro" id="IPR036849">
    <property type="entry name" value="Enolase-like_C_sf"/>
</dbReference>
<dbReference type="InterPro" id="IPR029017">
    <property type="entry name" value="Enolase-like_N"/>
</dbReference>
<dbReference type="InterPro" id="IPR020810">
    <property type="entry name" value="Enolase_C"/>
</dbReference>
<dbReference type="InterPro" id="IPR020809">
    <property type="entry name" value="Enolase_CS"/>
</dbReference>
<dbReference type="InterPro" id="IPR020811">
    <property type="entry name" value="Enolase_N"/>
</dbReference>
<dbReference type="NCBIfam" id="TIGR01060">
    <property type="entry name" value="eno"/>
    <property type="match status" value="1"/>
</dbReference>
<dbReference type="PANTHER" id="PTHR11902">
    <property type="entry name" value="ENOLASE"/>
    <property type="match status" value="1"/>
</dbReference>
<dbReference type="PANTHER" id="PTHR11902:SF1">
    <property type="entry name" value="ENOLASE"/>
    <property type="match status" value="1"/>
</dbReference>
<dbReference type="Pfam" id="PF00113">
    <property type="entry name" value="Enolase_C"/>
    <property type="match status" value="1"/>
</dbReference>
<dbReference type="Pfam" id="PF03952">
    <property type="entry name" value="Enolase_N"/>
    <property type="match status" value="1"/>
</dbReference>
<dbReference type="PIRSF" id="PIRSF001400">
    <property type="entry name" value="Enolase"/>
    <property type="match status" value="1"/>
</dbReference>
<dbReference type="PRINTS" id="PR00148">
    <property type="entry name" value="ENOLASE"/>
</dbReference>
<dbReference type="SFLD" id="SFLDS00001">
    <property type="entry name" value="Enolase"/>
    <property type="match status" value="1"/>
</dbReference>
<dbReference type="SFLD" id="SFLDF00002">
    <property type="entry name" value="enolase"/>
    <property type="match status" value="1"/>
</dbReference>
<dbReference type="SMART" id="SM01192">
    <property type="entry name" value="Enolase_C"/>
    <property type="match status" value="1"/>
</dbReference>
<dbReference type="SMART" id="SM01193">
    <property type="entry name" value="Enolase_N"/>
    <property type="match status" value="1"/>
</dbReference>
<dbReference type="SUPFAM" id="SSF51604">
    <property type="entry name" value="Enolase C-terminal domain-like"/>
    <property type="match status" value="1"/>
</dbReference>
<dbReference type="SUPFAM" id="SSF54826">
    <property type="entry name" value="Enolase N-terminal domain-like"/>
    <property type="match status" value="1"/>
</dbReference>
<dbReference type="PROSITE" id="PS00164">
    <property type="entry name" value="ENOLASE"/>
    <property type="match status" value="1"/>
</dbReference>
<comment type="function">
    <text evidence="1">Catalyzes the reversible conversion of 2-phosphoglycerate (2-PG) into phosphoenolpyruvate (PEP). It is essential for the degradation of carbohydrates via glycolysis.</text>
</comment>
<comment type="catalytic activity">
    <reaction evidence="1">
        <text>(2R)-2-phosphoglycerate = phosphoenolpyruvate + H2O</text>
        <dbReference type="Rhea" id="RHEA:10164"/>
        <dbReference type="ChEBI" id="CHEBI:15377"/>
        <dbReference type="ChEBI" id="CHEBI:58289"/>
        <dbReference type="ChEBI" id="CHEBI:58702"/>
        <dbReference type="EC" id="4.2.1.11"/>
    </reaction>
</comment>
<comment type="cofactor">
    <cofactor evidence="1">
        <name>Mg(2+)</name>
        <dbReference type="ChEBI" id="CHEBI:18420"/>
    </cofactor>
    <text evidence="1">Binds a second Mg(2+) ion via substrate during catalysis.</text>
</comment>
<comment type="pathway">
    <text evidence="1">Carbohydrate degradation; glycolysis; pyruvate from D-glyceraldehyde 3-phosphate: step 4/5.</text>
</comment>
<comment type="subcellular location">
    <subcellularLocation>
        <location evidence="1">Cytoplasm</location>
    </subcellularLocation>
    <subcellularLocation>
        <location evidence="1">Secreted</location>
    </subcellularLocation>
    <subcellularLocation>
        <location evidence="1">Cell surface</location>
    </subcellularLocation>
    <text evidence="1">Fractions of enolase are present in both the cytoplasm and on the cell surface.</text>
</comment>
<comment type="similarity">
    <text evidence="1">Belongs to the enolase family.</text>
</comment>